<proteinExistence type="inferred from homology"/>
<name>LGT_RICCK</name>
<comment type="function">
    <text evidence="1">Catalyzes the transfer of the diacylglyceryl group from phosphatidylglycerol to the sulfhydryl group of the N-terminal cysteine of a prolipoprotein, the first step in the formation of mature lipoproteins.</text>
</comment>
<comment type="catalytic activity">
    <reaction evidence="1">
        <text>L-cysteinyl-[prolipoprotein] + a 1,2-diacyl-sn-glycero-3-phospho-(1'-sn-glycerol) = an S-1,2-diacyl-sn-glyceryl-L-cysteinyl-[prolipoprotein] + sn-glycerol 1-phosphate + H(+)</text>
        <dbReference type="Rhea" id="RHEA:56712"/>
        <dbReference type="Rhea" id="RHEA-COMP:14679"/>
        <dbReference type="Rhea" id="RHEA-COMP:14680"/>
        <dbReference type="ChEBI" id="CHEBI:15378"/>
        <dbReference type="ChEBI" id="CHEBI:29950"/>
        <dbReference type="ChEBI" id="CHEBI:57685"/>
        <dbReference type="ChEBI" id="CHEBI:64716"/>
        <dbReference type="ChEBI" id="CHEBI:140658"/>
        <dbReference type="EC" id="2.5.1.145"/>
    </reaction>
</comment>
<comment type="pathway">
    <text evidence="1">Protein modification; lipoprotein biosynthesis (diacylglyceryl transfer).</text>
</comment>
<comment type="subcellular location">
    <subcellularLocation>
        <location evidence="1">Cell inner membrane</location>
        <topology evidence="1">Multi-pass membrane protein</topology>
    </subcellularLocation>
</comment>
<comment type="similarity">
    <text evidence="1">Belongs to the Lgt family.</text>
</comment>
<gene>
    <name evidence="1" type="primary">lgt</name>
    <name type="ordered locus">A1E_00220</name>
</gene>
<dbReference type="EC" id="2.5.1.145" evidence="1"/>
<dbReference type="EMBL" id="CP000409">
    <property type="protein sequence ID" value="ABV72997.1"/>
    <property type="molecule type" value="Genomic_DNA"/>
</dbReference>
<dbReference type="RefSeq" id="WP_012148198.1">
    <property type="nucleotide sequence ID" value="NC_009879.1"/>
</dbReference>
<dbReference type="SMR" id="A8EXB4"/>
<dbReference type="STRING" id="293613.A1E_00220"/>
<dbReference type="KEGG" id="rcm:A1E_00220"/>
<dbReference type="eggNOG" id="COG0682">
    <property type="taxonomic scope" value="Bacteria"/>
</dbReference>
<dbReference type="HOGENOM" id="CLU_013386_1_0_5"/>
<dbReference type="UniPathway" id="UPA00664"/>
<dbReference type="Proteomes" id="UP000007056">
    <property type="component" value="Chromosome"/>
</dbReference>
<dbReference type="GO" id="GO:0005886">
    <property type="term" value="C:plasma membrane"/>
    <property type="evidence" value="ECO:0007669"/>
    <property type="project" value="UniProtKB-SubCell"/>
</dbReference>
<dbReference type="GO" id="GO:0008961">
    <property type="term" value="F:phosphatidylglycerol-prolipoprotein diacylglyceryl transferase activity"/>
    <property type="evidence" value="ECO:0007669"/>
    <property type="project" value="UniProtKB-UniRule"/>
</dbReference>
<dbReference type="GO" id="GO:0042158">
    <property type="term" value="P:lipoprotein biosynthetic process"/>
    <property type="evidence" value="ECO:0007669"/>
    <property type="project" value="UniProtKB-UniRule"/>
</dbReference>
<dbReference type="HAMAP" id="MF_01147">
    <property type="entry name" value="Lgt"/>
    <property type="match status" value="1"/>
</dbReference>
<dbReference type="InterPro" id="IPR001640">
    <property type="entry name" value="Lgt"/>
</dbReference>
<dbReference type="NCBIfam" id="TIGR00544">
    <property type="entry name" value="lgt"/>
    <property type="match status" value="1"/>
</dbReference>
<dbReference type="PANTHER" id="PTHR30589:SF0">
    <property type="entry name" value="PHOSPHATIDYLGLYCEROL--PROLIPOPROTEIN DIACYLGLYCERYL TRANSFERASE"/>
    <property type="match status" value="1"/>
</dbReference>
<dbReference type="PANTHER" id="PTHR30589">
    <property type="entry name" value="PROLIPOPROTEIN DIACYLGLYCERYL TRANSFERASE"/>
    <property type="match status" value="1"/>
</dbReference>
<dbReference type="Pfam" id="PF01790">
    <property type="entry name" value="LGT"/>
    <property type="match status" value="1"/>
</dbReference>
<dbReference type="PROSITE" id="PS01311">
    <property type="entry name" value="LGT"/>
    <property type="match status" value="1"/>
</dbReference>
<feature type="chain" id="PRO_1000053493" description="Phosphatidylglycerol--prolipoprotein diacylglyceryl transferase">
    <location>
        <begin position="1"/>
        <end position="259"/>
    </location>
</feature>
<feature type="transmembrane region" description="Helical" evidence="1">
    <location>
        <begin position="16"/>
        <end position="36"/>
    </location>
</feature>
<feature type="transmembrane region" description="Helical" evidence="1">
    <location>
        <begin position="55"/>
        <end position="75"/>
    </location>
</feature>
<feature type="transmembrane region" description="Helical" evidence="1">
    <location>
        <begin position="92"/>
        <end position="112"/>
    </location>
</feature>
<feature type="transmembrane region" description="Helical" evidence="1">
    <location>
        <begin position="117"/>
        <end position="137"/>
    </location>
</feature>
<feature type="transmembrane region" description="Helical" evidence="1">
    <location>
        <begin position="172"/>
        <end position="192"/>
    </location>
</feature>
<feature type="transmembrane region" description="Helical" evidence="1">
    <location>
        <begin position="201"/>
        <end position="221"/>
    </location>
</feature>
<feature type="transmembrane region" description="Helical" evidence="1">
    <location>
        <begin position="228"/>
        <end position="248"/>
    </location>
</feature>
<feature type="binding site" evidence="1">
    <location>
        <position position="138"/>
    </location>
    <ligand>
        <name>a 1,2-diacyl-sn-glycero-3-phospho-(1'-sn-glycerol)</name>
        <dbReference type="ChEBI" id="CHEBI:64716"/>
    </ligand>
</feature>
<reference key="1">
    <citation type="submission" date="2007-09" db="EMBL/GenBank/DDBJ databases">
        <title>Complete genome sequence of Rickettsia canadensis.</title>
        <authorList>
            <person name="Madan A."/>
            <person name="Fahey J."/>
            <person name="Helton E."/>
            <person name="Ketteman M."/>
            <person name="Madan A."/>
            <person name="Rodrigues S."/>
            <person name="Sanchez A."/>
            <person name="Whiting M."/>
            <person name="Dasch G."/>
            <person name="Eremeeva M."/>
        </authorList>
    </citation>
    <scope>NUCLEOTIDE SEQUENCE [LARGE SCALE GENOMIC DNA]</scope>
    <source>
        <strain>McKiel</strain>
    </source>
</reference>
<keyword id="KW-0997">Cell inner membrane</keyword>
<keyword id="KW-1003">Cell membrane</keyword>
<keyword id="KW-0472">Membrane</keyword>
<keyword id="KW-0808">Transferase</keyword>
<keyword id="KW-0812">Transmembrane</keyword>
<keyword id="KW-1133">Transmembrane helix</keyword>
<organism>
    <name type="scientific">Rickettsia canadensis (strain McKiel)</name>
    <dbReference type="NCBI Taxonomy" id="293613"/>
    <lineage>
        <taxon>Bacteria</taxon>
        <taxon>Pseudomonadati</taxon>
        <taxon>Pseudomonadota</taxon>
        <taxon>Alphaproteobacteria</taxon>
        <taxon>Rickettsiales</taxon>
        <taxon>Rickettsiaceae</taxon>
        <taxon>Rickettsieae</taxon>
        <taxon>Rickettsia</taxon>
        <taxon>belli group</taxon>
    </lineage>
</organism>
<sequence length="259" mass="29151">MIFPNINPVIFSIGPFAISWYSLSYVIGILLGWFYANKIIEKFKPQITKKNLEDFITYAVIGIIVGGRLGFVLLYNPSRYFSNPIDILKTYQGGMSFHGGALGVIIAAYLFCRKYKVNFLSLTDIIATVVPIGLFLGRIANFINGELYGRITNSSFGIIFPNSDLSPRHPSQLYEAFFEGLVLFCILAYATFKHKTLEKRALNLGLFLTFYALFRITIEIFREPDMQIGFILDSLTMGQILSIPMLILGSSLICQSTLK</sequence>
<protein>
    <recommendedName>
        <fullName evidence="1">Phosphatidylglycerol--prolipoprotein diacylglyceryl transferase</fullName>
        <ecNumber evidence="1">2.5.1.145</ecNumber>
    </recommendedName>
</protein>
<accession>A8EXB4</accession>
<evidence type="ECO:0000255" key="1">
    <source>
        <dbReference type="HAMAP-Rule" id="MF_01147"/>
    </source>
</evidence>